<reference key="1">
    <citation type="book" date="2006" name="Gram positive pathogens, 2nd edition">
        <title>The Staphylococcus aureus NCTC 8325 genome.</title>
        <editorList>
            <person name="Fischetti V."/>
            <person name="Novick R."/>
            <person name="Ferretti J."/>
            <person name="Portnoy D."/>
            <person name="Rood J."/>
        </editorList>
        <authorList>
            <person name="Gillaspy A.F."/>
            <person name="Worrell V."/>
            <person name="Orvis J."/>
            <person name="Roe B.A."/>
            <person name="Dyer D.W."/>
            <person name="Iandolo J.J."/>
        </authorList>
    </citation>
    <scope>NUCLEOTIDE SEQUENCE [LARGE SCALE GENOMIC DNA]</scope>
    <source>
        <strain>NCTC 8325 / PS 47</strain>
    </source>
</reference>
<gene>
    <name evidence="1" type="primary">rpoA</name>
    <name type="ordered locus">SAOUHSC_02485</name>
</gene>
<accession>Q2FW32</accession>
<evidence type="ECO:0000255" key="1">
    <source>
        <dbReference type="HAMAP-Rule" id="MF_00059"/>
    </source>
</evidence>
<proteinExistence type="evidence at protein level"/>
<sequence length="314" mass="35012">MIEIEKPRIETIEISEDAKFGKFVVEPLERGYGTTLGNSLRRILLSSLPGAAVKYIEIEGVLHEFSAVDNVVEDVSTIIMNIKQLALKIYSEEDKTLEIDVRDEGEVTASDITHDSDVEILNPELKIATVSKGGHLKIRLVANKGRGYALAEQNNTSDLPIGVIPVDSLYSPVERVNYTVENTRVGQSSDFDKLTLDVWTNGSITPQESVSLAAKIMTEHLNIFVGLTDEAQNAEIMIEKEEDQKEKVLEMSIEELDLSVRSYNCLKRAGINSVQELADKSEADMMKVRNLGRKSLEEVKYKLEDLGLGLRKED</sequence>
<comment type="function">
    <text evidence="1">DNA-dependent RNA polymerase catalyzes the transcription of DNA into RNA using the four ribonucleoside triphosphates as substrates.</text>
</comment>
<comment type="catalytic activity">
    <reaction evidence="1">
        <text>RNA(n) + a ribonucleoside 5'-triphosphate = RNA(n+1) + diphosphate</text>
        <dbReference type="Rhea" id="RHEA:21248"/>
        <dbReference type="Rhea" id="RHEA-COMP:14527"/>
        <dbReference type="Rhea" id="RHEA-COMP:17342"/>
        <dbReference type="ChEBI" id="CHEBI:33019"/>
        <dbReference type="ChEBI" id="CHEBI:61557"/>
        <dbReference type="ChEBI" id="CHEBI:140395"/>
        <dbReference type="EC" id="2.7.7.6"/>
    </reaction>
</comment>
<comment type="subunit">
    <text evidence="1">Homodimer. The RNAP catalytic core consists of 2 alpha, 1 beta, 1 beta' and 1 omega subunit. When a sigma factor is associated with the core the holoenzyme is formed, which can initiate transcription.</text>
</comment>
<comment type="domain">
    <text evidence="1">The N-terminal domain is essential for RNAP assembly and basal transcription, whereas the C-terminal domain is involved in interaction with transcriptional regulators and with upstream promoter elements.</text>
</comment>
<comment type="similarity">
    <text evidence="1">Belongs to the RNA polymerase alpha chain family.</text>
</comment>
<name>RPOA_STAA8</name>
<dbReference type="EC" id="2.7.7.6" evidence="1"/>
<dbReference type="EMBL" id="CP000253">
    <property type="protein sequence ID" value="ABD31504.1"/>
    <property type="molecule type" value="Genomic_DNA"/>
</dbReference>
<dbReference type="RefSeq" id="WP_000569649.1">
    <property type="nucleotide sequence ID" value="NZ_LS483365.1"/>
</dbReference>
<dbReference type="RefSeq" id="YP_500953.1">
    <property type="nucleotide sequence ID" value="NC_007795.1"/>
</dbReference>
<dbReference type="PDB" id="8X6F">
    <property type="method" value="EM"/>
    <property type="resolution" value="3.70 A"/>
    <property type="chains" value="A/B=1-314"/>
</dbReference>
<dbReference type="PDB" id="8X6G">
    <property type="method" value="EM"/>
    <property type="resolution" value="3.30 A"/>
    <property type="chains" value="A/B=1-314"/>
</dbReference>
<dbReference type="PDBsum" id="8X6F"/>
<dbReference type="PDBsum" id="8X6G"/>
<dbReference type="SMR" id="Q2FW32"/>
<dbReference type="STRING" id="93061.SAOUHSC_02485"/>
<dbReference type="PaxDb" id="1280-SAXN108_2474"/>
<dbReference type="GeneID" id="3920862"/>
<dbReference type="KEGG" id="sao:SAOUHSC_02485"/>
<dbReference type="PATRIC" id="fig|93061.5.peg.2241"/>
<dbReference type="eggNOG" id="COG0202">
    <property type="taxonomic scope" value="Bacteria"/>
</dbReference>
<dbReference type="HOGENOM" id="CLU_053084_0_1_9"/>
<dbReference type="OrthoDB" id="9805706at2"/>
<dbReference type="PRO" id="PR:Q2FW32"/>
<dbReference type="Proteomes" id="UP000008816">
    <property type="component" value="Chromosome"/>
</dbReference>
<dbReference type="GO" id="GO:0005737">
    <property type="term" value="C:cytoplasm"/>
    <property type="evidence" value="ECO:0000318"/>
    <property type="project" value="GO_Central"/>
</dbReference>
<dbReference type="GO" id="GO:0000428">
    <property type="term" value="C:DNA-directed RNA polymerase complex"/>
    <property type="evidence" value="ECO:0007669"/>
    <property type="project" value="UniProtKB-KW"/>
</dbReference>
<dbReference type="GO" id="GO:0003677">
    <property type="term" value="F:DNA binding"/>
    <property type="evidence" value="ECO:0007669"/>
    <property type="project" value="UniProtKB-UniRule"/>
</dbReference>
<dbReference type="GO" id="GO:0003899">
    <property type="term" value="F:DNA-directed RNA polymerase activity"/>
    <property type="evidence" value="ECO:0007669"/>
    <property type="project" value="UniProtKB-UniRule"/>
</dbReference>
<dbReference type="GO" id="GO:0046983">
    <property type="term" value="F:protein dimerization activity"/>
    <property type="evidence" value="ECO:0007669"/>
    <property type="project" value="InterPro"/>
</dbReference>
<dbReference type="GO" id="GO:0006351">
    <property type="term" value="P:DNA-templated transcription"/>
    <property type="evidence" value="ECO:0007669"/>
    <property type="project" value="UniProtKB-UniRule"/>
</dbReference>
<dbReference type="CDD" id="cd06928">
    <property type="entry name" value="RNAP_alpha_NTD"/>
    <property type="match status" value="1"/>
</dbReference>
<dbReference type="FunFam" id="1.10.150.20:FF:000001">
    <property type="entry name" value="DNA-directed RNA polymerase subunit alpha"/>
    <property type="match status" value="1"/>
</dbReference>
<dbReference type="FunFam" id="2.170.120.12:FF:000001">
    <property type="entry name" value="DNA-directed RNA polymerase subunit alpha"/>
    <property type="match status" value="1"/>
</dbReference>
<dbReference type="Gene3D" id="1.10.150.20">
    <property type="entry name" value="5' to 3' exonuclease, C-terminal subdomain"/>
    <property type="match status" value="1"/>
</dbReference>
<dbReference type="Gene3D" id="2.170.120.12">
    <property type="entry name" value="DNA-directed RNA polymerase, insert domain"/>
    <property type="match status" value="1"/>
</dbReference>
<dbReference type="Gene3D" id="3.30.1360.10">
    <property type="entry name" value="RNA polymerase, RBP11-like subunit"/>
    <property type="match status" value="1"/>
</dbReference>
<dbReference type="HAMAP" id="MF_00059">
    <property type="entry name" value="RNApol_bact_RpoA"/>
    <property type="match status" value="1"/>
</dbReference>
<dbReference type="InterPro" id="IPR011262">
    <property type="entry name" value="DNA-dir_RNA_pol_insert"/>
</dbReference>
<dbReference type="InterPro" id="IPR011263">
    <property type="entry name" value="DNA-dir_RNA_pol_RpoA/D/Rpb3"/>
</dbReference>
<dbReference type="InterPro" id="IPR011773">
    <property type="entry name" value="DNA-dir_RpoA"/>
</dbReference>
<dbReference type="InterPro" id="IPR036603">
    <property type="entry name" value="RBP11-like"/>
</dbReference>
<dbReference type="InterPro" id="IPR011260">
    <property type="entry name" value="RNAP_asu_C"/>
</dbReference>
<dbReference type="InterPro" id="IPR036643">
    <property type="entry name" value="RNApol_insert_sf"/>
</dbReference>
<dbReference type="NCBIfam" id="NF003513">
    <property type="entry name" value="PRK05182.1-2"/>
    <property type="match status" value="1"/>
</dbReference>
<dbReference type="NCBIfam" id="NF003515">
    <property type="entry name" value="PRK05182.2-1"/>
    <property type="match status" value="1"/>
</dbReference>
<dbReference type="NCBIfam" id="NF003519">
    <property type="entry name" value="PRK05182.2-5"/>
    <property type="match status" value="1"/>
</dbReference>
<dbReference type="NCBIfam" id="TIGR02027">
    <property type="entry name" value="rpoA"/>
    <property type="match status" value="1"/>
</dbReference>
<dbReference type="Pfam" id="PF01000">
    <property type="entry name" value="RNA_pol_A_bac"/>
    <property type="match status" value="1"/>
</dbReference>
<dbReference type="Pfam" id="PF03118">
    <property type="entry name" value="RNA_pol_A_CTD"/>
    <property type="match status" value="1"/>
</dbReference>
<dbReference type="Pfam" id="PF01193">
    <property type="entry name" value="RNA_pol_L"/>
    <property type="match status" value="1"/>
</dbReference>
<dbReference type="SMART" id="SM00662">
    <property type="entry name" value="RPOLD"/>
    <property type="match status" value="1"/>
</dbReference>
<dbReference type="SUPFAM" id="SSF47789">
    <property type="entry name" value="C-terminal domain of RNA polymerase alpha subunit"/>
    <property type="match status" value="1"/>
</dbReference>
<dbReference type="SUPFAM" id="SSF56553">
    <property type="entry name" value="Insert subdomain of RNA polymerase alpha subunit"/>
    <property type="match status" value="1"/>
</dbReference>
<dbReference type="SUPFAM" id="SSF55257">
    <property type="entry name" value="RBP11-like subunits of RNA polymerase"/>
    <property type="match status" value="1"/>
</dbReference>
<feature type="chain" id="PRO_0000264551" description="DNA-directed RNA polymerase subunit alpha">
    <location>
        <begin position="1"/>
        <end position="314"/>
    </location>
</feature>
<feature type="region of interest" description="Alpha N-terminal domain (alpha-NTD)" evidence="1">
    <location>
        <begin position="1"/>
        <end position="228"/>
    </location>
</feature>
<feature type="region of interest" description="Alpha C-terminal domain (alpha-CTD)" evidence="1">
    <location>
        <begin position="245"/>
        <end position="314"/>
    </location>
</feature>
<organism>
    <name type="scientific">Staphylococcus aureus (strain NCTC 8325 / PS 47)</name>
    <dbReference type="NCBI Taxonomy" id="93061"/>
    <lineage>
        <taxon>Bacteria</taxon>
        <taxon>Bacillati</taxon>
        <taxon>Bacillota</taxon>
        <taxon>Bacilli</taxon>
        <taxon>Bacillales</taxon>
        <taxon>Staphylococcaceae</taxon>
        <taxon>Staphylococcus</taxon>
    </lineage>
</organism>
<keyword id="KW-0002">3D-structure</keyword>
<keyword id="KW-0240">DNA-directed RNA polymerase</keyword>
<keyword id="KW-0548">Nucleotidyltransferase</keyword>
<keyword id="KW-1185">Reference proteome</keyword>
<keyword id="KW-0804">Transcription</keyword>
<keyword id="KW-0808">Transferase</keyword>
<protein>
    <recommendedName>
        <fullName evidence="1">DNA-directed RNA polymerase subunit alpha</fullName>
        <shortName evidence="1">RNAP subunit alpha</shortName>
        <ecNumber evidence="1">2.7.7.6</ecNumber>
    </recommendedName>
    <alternativeName>
        <fullName evidence="1">RNA polymerase subunit alpha</fullName>
    </alternativeName>
    <alternativeName>
        <fullName evidence="1">Transcriptase subunit alpha</fullName>
    </alternativeName>
</protein>